<feature type="chain" id="PRO_0000378429" description="Protein argonaute 2">
    <location>
        <begin position="1"/>
        <end position="1034"/>
    </location>
</feature>
<feature type="domain" description="PAZ" evidence="2">
    <location>
        <begin position="391"/>
        <end position="504"/>
    </location>
</feature>
<feature type="domain" description="Piwi" evidence="3">
    <location>
        <begin position="688"/>
        <end position="989"/>
    </location>
</feature>
<feature type="region of interest" description="Disordered" evidence="4">
    <location>
        <begin position="1"/>
        <end position="201"/>
    </location>
</feature>
<feature type="compositionally biased region" description="Gly residues" evidence="4">
    <location>
        <begin position="18"/>
        <end position="125"/>
    </location>
</feature>
<feature type="compositionally biased region" description="Low complexity" evidence="4">
    <location>
        <begin position="172"/>
        <end position="187"/>
    </location>
</feature>
<feature type="sequence conflict" description="In Ref. 5; AK120766." evidence="5" ref="5">
    <original>D</original>
    <variation>N</variation>
    <location>
        <position position="948"/>
    </location>
</feature>
<reference key="1">
    <citation type="journal article" date="2002" name="Nature">
        <title>Sequence and analysis of rice chromosome 4.</title>
        <authorList>
            <person name="Feng Q."/>
            <person name="Zhang Y."/>
            <person name="Hao P."/>
            <person name="Wang S."/>
            <person name="Fu G."/>
            <person name="Huang Y."/>
            <person name="Li Y."/>
            <person name="Zhu J."/>
            <person name="Liu Y."/>
            <person name="Hu X."/>
            <person name="Jia P."/>
            <person name="Zhang Y."/>
            <person name="Zhao Q."/>
            <person name="Ying K."/>
            <person name="Yu S."/>
            <person name="Tang Y."/>
            <person name="Weng Q."/>
            <person name="Zhang L."/>
            <person name="Lu Y."/>
            <person name="Mu J."/>
            <person name="Lu Y."/>
            <person name="Zhang L.S."/>
            <person name="Yu Z."/>
            <person name="Fan D."/>
            <person name="Liu X."/>
            <person name="Lu T."/>
            <person name="Li C."/>
            <person name="Wu Y."/>
            <person name="Sun T."/>
            <person name="Lei H."/>
            <person name="Li T."/>
            <person name="Hu H."/>
            <person name="Guan J."/>
            <person name="Wu M."/>
            <person name="Zhang R."/>
            <person name="Zhou B."/>
            <person name="Chen Z."/>
            <person name="Chen L."/>
            <person name="Jin Z."/>
            <person name="Wang R."/>
            <person name="Yin H."/>
            <person name="Cai Z."/>
            <person name="Ren S."/>
            <person name="Lv G."/>
            <person name="Gu W."/>
            <person name="Zhu G."/>
            <person name="Tu Y."/>
            <person name="Jia J."/>
            <person name="Zhang Y."/>
            <person name="Chen J."/>
            <person name="Kang H."/>
            <person name="Chen X."/>
            <person name="Shao C."/>
            <person name="Sun Y."/>
            <person name="Hu Q."/>
            <person name="Zhang X."/>
            <person name="Zhang W."/>
            <person name="Wang L."/>
            <person name="Ding C."/>
            <person name="Sheng H."/>
            <person name="Gu J."/>
            <person name="Chen S."/>
            <person name="Ni L."/>
            <person name="Zhu F."/>
            <person name="Chen W."/>
            <person name="Lan L."/>
            <person name="Lai Y."/>
            <person name="Cheng Z."/>
            <person name="Gu M."/>
            <person name="Jiang J."/>
            <person name="Li J."/>
            <person name="Hong G."/>
            <person name="Xue Y."/>
            <person name="Han B."/>
        </authorList>
    </citation>
    <scope>NUCLEOTIDE SEQUENCE [LARGE SCALE GENOMIC DNA]</scope>
    <source>
        <strain>cv. Nipponbare</strain>
    </source>
</reference>
<reference key="2">
    <citation type="journal article" date="2005" name="Nature">
        <title>The map-based sequence of the rice genome.</title>
        <authorList>
            <consortium name="International rice genome sequencing project (IRGSP)"/>
        </authorList>
    </citation>
    <scope>NUCLEOTIDE SEQUENCE [LARGE SCALE GENOMIC DNA]</scope>
    <source>
        <strain>cv. Nipponbare</strain>
    </source>
</reference>
<reference key="3">
    <citation type="journal article" date="2008" name="Nucleic Acids Res.">
        <title>The rice annotation project database (RAP-DB): 2008 update.</title>
        <authorList>
            <consortium name="The rice annotation project (RAP)"/>
        </authorList>
    </citation>
    <scope>GENOME REANNOTATION</scope>
    <source>
        <strain>cv. Nipponbare</strain>
    </source>
</reference>
<reference key="4">
    <citation type="journal article" date="2013" name="Rice">
        <title>Improvement of the Oryza sativa Nipponbare reference genome using next generation sequence and optical map data.</title>
        <authorList>
            <person name="Kawahara Y."/>
            <person name="de la Bastide M."/>
            <person name="Hamilton J.P."/>
            <person name="Kanamori H."/>
            <person name="McCombie W.R."/>
            <person name="Ouyang S."/>
            <person name="Schwartz D.C."/>
            <person name="Tanaka T."/>
            <person name="Wu J."/>
            <person name="Zhou S."/>
            <person name="Childs K.L."/>
            <person name="Davidson R.M."/>
            <person name="Lin H."/>
            <person name="Quesada-Ocampo L."/>
            <person name="Vaillancourt B."/>
            <person name="Sakai H."/>
            <person name="Lee S.S."/>
            <person name="Kim J."/>
            <person name="Numa H."/>
            <person name="Itoh T."/>
            <person name="Buell C.R."/>
            <person name="Matsumoto T."/>
        </authorList>
    </citation>
    <scope>GENOME REANNOTATION</scope>
    <source>
        <strain>cv. Nipponbare</strain>
    </source>
</reference>
<reference key="5">
    <citation type="journal article" date="2003" name="Science">
        <title>Collection, mapping, and annotation of over 28,000 cDNA clones from japonica rice.</title>
        <authorList>
            <consortium name="The rice full-length cDNA consortium"/>
        </authorList>
    </citation>
    <scope>NUCLEOTIDE SEQUENCE [LARGE SCALE MRNA]</scope>
    <source>
        <strain>cv. Nipponbare</strain>
    </source>
</reference>
<reference key="6">
    <citation type="journal article" date="2008" name="BMC Genomics">
        <title>Genome-wide identification, organization and phylogenetic analysis of dicer-like, argonaute and RNA-dependent RNA polymerase gene families and their expression analysis during reproductive development and stress in rice.</title>
        <authorList>
            <person name="Kapoor M."/>
            <person name="Arora R."/>
            <person name="Lama T."/>
            <person name="Nijhawan A."/>
            <person name="Khurana J.P."/>
            <person name="Tyagi A.K."/>
            <person name="Kapoor S."/>
        </authorList>
    </citation>
    <scope>GENE FAMILY</scope>
    <scope>NOMENCLATURE</scope>
</reference>
<gene>
    <name type="primary">AGO2</name>
    <name type="ordered locus">Os04g0615700</name>
    <name type="ordered locus">LOC_Os04g52540</name>
    <name type="ORF">OSJNBa0008M17.11</name>
</gene>
<proteinExistence type="evidence at transcript level"/>
<dbReference type="EMBL" id="AL662950">
    <property type="protein sequence ID" value="CAD41795.2"/>
    <property type="molecule type" value="Genomic_DNA"/>
</dbReference>
<dbReference type="EMBL" id="AP008210">
    <property type="protein sequence ID" value="BAF15785.1"/>
    <property type="molecule type" value="Genomic_DNA"/>
</dbReference>
<dbReference type="EMBL" id="AP014960">
    <property type="protein sequence ID" value="BAS91002.1"/>
    <property type="molecule type" value="Genomic_DNA"/>
</dbReference>
<dbReference type="EMBL" id="AK120766">
    <property type="status" value="NOT_ANNOTATED_CDS"/>
    <property type="molecule type" value="mRNA"/>
</dbReference>
<dbReference type="RefSeq" id="XP_015636011.1">
    <property type="nucleotide sequence ID" value="XM_015780525.1"/>
</dbReference>
<dbReference type="SMR" id="Q7XTS4"/>
<dbReference type="FunCoup" id="Q7XTS4">
    <property type="interactions" value="120"/>
</dbReference>
<dbReference type="STRING" id="39947.Q7XTS4"/>
<dbReference type="iPTMnet" id="Q7XTS4"/>
<dbReference type="PaxDb" id="39947-Q7XTS4"/>
<dbReference type="EnsemblPlants" id="Os04t0615700-01">
    <property type="protein sequence ID" value="Os04t0615700-01"/>
    <property type="gene ID" value="Os04g0615700"/>
</dbReference>
<dbReference type="Gramene" id="Os04t0615700-01">
    <property type="protein sequence ID" value="Os04t0615700-01"/>
    <property type="gene ID" value="Os04g0615700"/>
</dbReference>
<dbReference type="KEGG" id="dosa:Os04g0615700"/>
<dbReference type="eggNOG" id="KOG1041">
    <property type="taxonomic scope" value="Eukaryota"/>
</dbReference>
<dbReference type="HOGENOM" id="CLU_004544_3_0_1"/>
<dbReference type="InParanoid" id="Q7XTS4"/>
<dbReference type="OMA" id="SINHESC"/>
<dbReference type="OrthoDB" id="10252740at2759"/>
<dbReference type="Proteomes" id="UP000000763">
    <property type="component" value="Chromosome 4"/>
</dbReference>
<dbReference type="Proteomes" id="UP000059680">
    <property type="component" value="Chromosome 4"/>
</dbReference>
<dbReference type="GO" id="GO:0005737">
    <property type="term" value="C:cytoplasm"/>
    <property type="evidence" value="ECO:0000318"/>
    <property type="project" value="GO_Central"/>
</dbReference>
<dbReference type="GO" id="GO:0005634">
    <property type="term" value="C:nucleus"/>
    <property type="evidence" value="ECO:0000318"/>
    <property type="project" value="GO_Central"/>
</dbReference>
<dbReference type="GO" id="GO:0003723">
    <property type="term" value="F:RNA binding"/>
    <property type="evidence" value="ECO:0000318"/>
    <property type="project" value="GO_Central"/>
</dbReference>
<dbReference type="GO" id="GO:0004521">
    <property type="term" value="F:RNA endonuclease activity"/>
    <property type="evidence" value="ECO:0000318"/>
    <property type="project" value="GO_Central"/>
</dbReference>
<dbReference type="GO" id="GO:0031047">
    <property type="term" value="P:regulatory ncRNA-mediated gene silencing"/>
    <property type="evidence" value="ECO:0000318"/>
    <property type="project" value="GO_Central"/>
</dbReference>
<dbReference type="CDD" id="cd02846">
    <property type="entry name" value="PAZ_argonaute_like"/>
    <property type="match status" value="1"/>
</dbReference>
<dbReference type="CDD" id="cd04657">
    <property type="entry name" value="Piwi_ago-like"/>
    <property type="match status" value="1"/>
</dbReference>
<dbReference type="Gene3D" id="3.40.50.2300">
    <property type="match status" value="1"/>
</dbReference>
<dbReference type="Gene3D" id="2.170.260.10">
    <property type="entry name" value="paz domain"/>
    <property type="match status" value="1"/>
</dbReference>
<dbReference type="Gene3D" id="3.30.420.10">
    <property type="entry name" value="Ribonuclease H-like superfamily/Ribonuclease H"/>
    <property type="match status" value="1"/>
</dbReference>
<dbReference type="InterPro" id="IPR014811">
    <property type="entry name" value="ArgoL1"/>
</dbReference>
<dbReference type="InterPro" id="IPR032474">
    <property type="entry name" value="Argonaute_N"/>
</dbReference>
<dbReference type="InterPro" id="IPR003100">
    <property type="entry name" value="PAZ_dom"/>
</dbReference>
<dbReference type="InterPro" id="IPR036085">
    <property type="entry name" value="PAZ_dom_sf"/>
</dbReference>
<dbReference type="InterPro" id="IPR003165">
    <property type="entry name" value="Piwi"/>
</dbReference>
<dbReference type="InterPro" id="IPR045246">
    <property type="entry name" value="Piwi_ago-like"/>
</dbReference>
<dbReference type="InterPro" id="IPR012337">
    <property type="entry name" value="RNaseH-like_sf"/>
</dbReference>
<dbReference type="InterPro" id="IPR036397">
    <property type="entry name" value="RNaseH_sf"/>
</dbReference>
<dbReference type="PANTHER" id="PTHR22891">
    <property type="entry name" value="EUKARYOTIC TRANSLATION INITIATION FACTOR 2C"/>
    <property type="match status" value="1"/>
</dbReference>
<dbReference type="Pfam" id="PF08699">
    <property type="entry name" value="ArgoL1"/>
    <property type="match status" value="1"/>
</dbReference>
<dbReference type="Pfam" id="PF16486">
    <property type="entry name" value="ArgoN"/>
    <property type="match status" value="1"/>
</dbReference>
<dbReference type="Pfam" id="PF02170">
    <property type="entry name" value="PAZ"/>
    <property type="match status" value="1"/>
</dbReference>
<dbReference type="Pfam" id="PF02171">
    <property type="entry name" value="Piwi"/>
    <property type="match status" value="1"/>
</dbReference>
<dbReference type="SMART" id="SM01163">
    <property type="entry name" value="DUF1785"/>
    <property type="match status" value="1"/>
</dbReference>
<dbReference type="SMART" id="SM00949">
    <property type="entry name" value="PAZ"/>
    <property type="match status" value="1"/>
</dbReference>
<dbReference type="SMART" id="SM00950">
    <property type="entry name" value="Piwi"/>
    <property type="match status" value="1"/>
</dbReference>
<dbReference type="SUPFAM" id="SSF101690">
    <property type="entry name" value="PAZ domain"/>
    <property type="match status" value="1"/>
</dbReference>
<dbReference type="SUPFAM" id="SSF53098">
    <property type="entry name" value="Ribonuclease H-like"/>
    <property type="match status" value="1"/>
</dbReference>
<dbReference type="PROSITE" id="PS50821">
    <property type="entry name" value="PAZ"/>
    <property type="match status" value="1"/>
</dbReference>
<dbReference type="PROSITE" id="PS50822">
    <property type="entry name" value="PIWI"/>
    <property type="match status" value="1"/>
</dbReference>
<sequence>MEHERGGGGRGRGRGRGGGRGGGGGDGRGGGYGGAGGGGVGGRGGRGPPGGGGGRGYEPGGGRGYGGGGGGGGRGYGGGGGGGGYESGGGRGYGGGGRGYESGGGRGPGGGGRGHESGGGGGRGGNVWAQPGRGRGGAPAPAPAPAPAARRIQDEGAARSSGTVERIASTEVVRVQPPAPPVAVSRSGTRVPMRRPDGGGSVSKAKVKLLVNHFIVKYRQASTVFHYDIDIKLDISSPKASDKELSKGDFLTVKDELFKDESFRRLSSAVAYDGKRNLFTCAELPDGLFRVKVRSRTYIVSVEFKKKLPLSQLSELPVPREVLQGLDVIVREASSWRKIIIGQGFYSQGRSVPIGPDVVALKGTQQTLKCTQKGLILCVDYSVMPFRKAGPVLDLVQKSVRYLDYRTTLNKHQLDTLKNELKGQRVTVNHRRTKQKYIVKGLTDKPASQITFVDSESGQTKKLLDYYSQQYGKVIEYQMLPCLDLSKSKDKQNYVPIELCDLLEGQRYPKASLNRNSDKTLKEMALIPASSRKEEILELVNADDGPCRGEIAQQFGISLDVQMMEVTGRTLPPPSLKLGTSSGQPPKFNIDQPNCQWNLTRKRLAEGGVLQCWGVVDFSADSGQYALNGNMFIDKIVRKCCDLGVQMNRNPCIVQLLDMEVLSDPHQLFEELNKAKQAAASKKQKLQLLFCPMSDQHPGYKTLKLICETQLGIQTQCFLSFLANKQQGQDQYMSNLALKINGKIGGSNIQLFGESLPRISGAPYMFIGADVNHPSPGNVESPSIAAVVASVDQGASKYVPRIRAQPHRCEVIQHLGDMCKELIGVFEKRNRVKPQRIIYFRDGVSDGQFDMVLNEELADMEKAIKTKDYSPTITVIVAKKRHHTRLFPKDLNQQQTKNGNVLPGTVVDTGVVDPAAYDFYLCSHNGLIGTSRPTHYYSLLDEHGFASDDLQKLVYNLCFVFARCTKPVSLATPVYYADLAAYRGRLYYEGMMMSQPPPSSAASASSASSSGAGASDFRSFPALHEDLVDNMFFI</sequence>
<accession>Q7XTS4</accession>
<accession>A0A0P0WEU6</accession>
<comment type="function">
    <text evidence="1">Probably involved in the RNA silencing pathway. May bind to short RNAs such as microRNAs (miRNAs) or short interfering RNAs (siRNAs), and represses the translation of mRNAs which are complementary to them (By similarity).</text>
</comment>
<comment type="similarity">
    <text evidence="5">Belongs to the argonaute family. Ago subfamily.</text>
</comment>
<keyword id="KW-1185">Reference proteome</keyword>
<keyword id="KW-0943">RNA-mediated gene silencing</keyword>
<evidence type="ECO:0000250" key="1"/>
<evidence type="ECO:0000255" key="2">
    <source>
        <dbReference type="PROSITE-ProRule" id="PRU00142"/>
    </source>
</evidence>
<evidence type="ECO:0000255" key="3">
    <source>
        <dbReference type="PROSITE-ProRule" id="PRU00150"/>
    </source>
</evidence>
<evidence type="ECO:0000256" key="4">
    <source>
        <dbReference type="SAM" id="MobiDB-lite"/>
    </source>
</evidence>
<evidence type="ECO:0000305" key="5"/>
<organism>
    <name type="scientific">Oryza sativa subsp. japonica</name>
    <name type="common">Rice</name>
    <dbReference type="NCBI Taxonomy" id="39947"/>
    <lineage>
        <taxon>Eukaryota</taxon>
        <taxon>Viridiplantae</taxon>
        <taxon>Streptophyta</taxon>
        <taxon>Embryophyta</taxon>
        <taxon>Tracheophyta</taxon>
        <taxon>Spermatophyta</taxon>
        <taxon>Magnoliopsida</taxon>
        <taxon>Liliopsida</taxon>
        <taxon>Poales</taxon>
        <taxon>Poaceae</taxon>
        <taxon>BOP clade</taxon>
        <taxon>Oryzoideae</taxon>
        <taxon>Oryzeae</taxon>
        <taxon>Oryzinae</taxon>
        <taxon>Oryza</taxon>
        <taxon>Oryza sativa</taxon>
    </lineage>
</organism>
<name>AGO2_ORYSJ</name>
<protein>
    <recommendedName>
        <fullName>Protein argonaute 2</fullName>
        <shortName>OsAGO2</shortName>
    </recommendedName>
</protein>